<comment type="function">
    <text evidence="1">Converts the preformed base xanthine, a product of nucleic acid breakdown, to xanthosine 5'-monophosphate (XMP), so it can be reused for RNA or DNA synthesis.</text>
</comment>
<comment type="catalytic activity">
    <reaction evidence="1">
        <text>XMP + diphosphate = xanthine + 5-phospho-alpha-D-ribose 1-diphosphate</text>
        <dbReference type="Rhea" id="RHEA:10800"/>
        <dbReference type="ChEBI" id="CHEBI:17712"/>
        <dbReference type="ChEBI" id="CHEBI:33019"/>
        <dbReference type="ChEBI" id="CHEBI:57464"/>
        <dbReference type="ChEBI" id="CHEBI:58017"/>
        <dbReference type="EC" id="2.4.2.22"/>
    </reaction>
</comment>
<comment type="pathway">
    <text evidence="1">Purine metabolism; XMP biosynthesis via salvage pathway; XMP from xanthine: step 1/1.</text>
</comment>
<comment type="subunit">
    <text evidence="1">Homodimer.</text>
</comment>
<comment type="subcellular location">
    <subcellularLocation>
        <location evidence="1">Cytoplasm</location>
    </subcellularLocation>
</comment>
<comment type="similarity">
    <text evidence="1">Belongs to the purine/pyrimidine phosphoribosyltransferase family. Xpt subfamily.</text>
</comment>
<dbReference type="EC" id="2.4.2.22" evidence="1"/>
<dbReference type="EMBL" id="CP000114">
    <property type="protein sequence ID" value="ABA46348.1"/>
    <property type="molecule type" value="Genomic_DNA"/>
</dbReference>
<dbReference type="RefSeq" id="WP_000770389.1">
    <property type="nucleotide sequence ID" value="NC_007432.1"/>
</dbReference>
<dbReference type="SMR" id="Q3K111"/>
<dbReference type="KEGG" id="sak:SAK_1171"/>
<dbReference type="HOGENOM" id="CLU_099015_0_0_9"/>
<dbReference type="UniPathway" id="UPA00602">
    <property type="reaction ID" value="UER00658"/>
</dbReference>
<dbReference type="GO" id="GO:0005737">
    <property type="term" value="C:cytoplasm"/>
    <property type="evidence" value="ECO:0007669"/>
    <property type="project" value="UniProtKB-SubCell"/>
</dbReference>
<dbReference type="GO" id="GO:0000310">
    <property type="term" value="F:xanthine phosphoribosyltransferase activity"/>
    <property type="evidence" value="ECO:0007669"/>
    <property type="project" value="UniProtKB-UniRule"/>
</dbReference>
<dbReference type="GO" id="GO:0006166">
    <property type="term" value="P:purine ribonucleoside salvage"/>
    <property type="evidence" value="ECO:0007669"/>
    <property type="project" value="UniProtKB-KW"/>
</dbReference>
<dbReference type="GO" id="GO:0046110">
    <property type="term" value="P:xanthine metabolic process"/>
    <property type="evidence" value="ECO:0007669"/>
    <property type="project" value="InterPro"/>
</dbReference>
<dbReference type="GO" id="GO:0032265">
    <property type="term" value="P:XMP salvage"/>
    <property type="evidence" value="ECO:0007669"/>
    <property type="project" value="UniProtKB-UniRule"/>
</dbReference>
<dbReference type="CDD" id="cd06223">
    <property type="entry name" value="PRTases_typeI"/>
    <property type="match status" value="1"/>
</dbReference>
<dbReference type="Gene3D" id="3.40.50.2020">
    <property type="match status" value="1"/>
</dbReference>
<dbReference type="HAMAP" id="MF_01184">
    <property type="entry name" value="XPRTase"/>
    <property type="match status" value="1"/>
</dbReference>
<dbReference type="InterPro" id="IPR000836">
    <property type="entry name" value="PRibTrfase_dom"/>
</dbReference>
<dbReference type="InterPro" id="IPR029057">
    <property type="entry name" value="PRTase-like"/>
</dbReference>
<dbReference type="InterPro" id="IPR050118">
    <property type="entry name" value="Pur/Pyrimidine_PRTase"/>
</dbReference>
<dbReference type="InterPro" id="IPR010079">
    <property type="entry name" value="Xanthine_PRibTrfase"/>
</dbReference>
<dbReference type="NCBIfam" id="NF006671">
    <property type="entry name" value="PRK09219.1"/>
    <property type="match status" value="1"/>
</dbReference>
<dbReference type="NCBIfam" id="TIGR01744">
    <property type="entry name" value="XPRTase"/>
    <property type="match status" value="1"/>
</dbReference>
<dbReference type="PANTHER" id="PTHR43864">
    <property type="entry name" value="HYPOXANTHINE/GUANINE PHOSPHORIBOSYLTRANSFERASE"/>
    <property type="match status" value="1"/>
</dbReference>
<dbReference type="PANTHER" id="PTHR43864:SF1">
    <property type="entry name" value="XANTHINE PHOSPHORIBOSYLTRANSFERASE"/>
    <property type="match status" value="1"/>
</dbReference>
<dbReference type="Pfam" id="PF00156">
    <property type="entry name" value="Pribosyltran"/>
    <property type="match status" value="1"/>
</dbReference>
<dbReference type="SUPFAM" id="SSF53271">
    <property type="entry name" value="PRTase-like"/>
    <property type="match status" value="1"/>
</dbReference>
<accession>Q3K111</accession>
<gene>
    <name evidence="1" type="primary">xpt</name>
    <name type="ordered locus">SAK_1171</name>
</gene>
<name>XPT_STRA1</name>
<protein>
    <recommendedName>
        <fullName evidence="1">Xanthine phosphoribosyltransferase</fullName>
        <shortName evidence="1">XPRTase</shortName>
        <ecNumber evidence="1">2.4.2.22</ecNumber>
    </recommendedName>
</protein>
<organism>
    <name type="scientific">Streptococcus agalactiae serotype Ia (strain ATCC 27591 / A909 / CDC SS700)</name>
    <dbReference type="NCBI Taxonomy" id="205921"/>
    <lineage>
        <taxon>Bacteria</taxon>
        <taxon>Bacillati</taxon>
        <taxon>Bacillota</taxon>
        <taxon>Bacilli</taxon>
        <taxon>Lactobacillales</taxon>
        <taxon>Streptococcaceae</taxon>
        <taxon>Streptococcus</taxon>
    </lineage>
</organism>
<reference key="1">
    <citation type="journal article" date="2005" name="Proc. Natl. Acad. Sci. U.S.A.">
        <title>Genome analysis of multiple pathogenic isolates of Streptococcus agalactiae: implications for the microbial 'pan-genome'.</title>
        <authorList>
            <person name="Tettelin H."/>
            <person name="Masignani V."/>
            <person name="Cieslewicz M.J."/>
            <person name="Donati C."/>
            <person name="Medini D."/>
            <person name="Ward N.L."/>
            <person name="Angiuoli S.V."/>
            <person name="Crabtree J."/>
            <person name="Jones A.L."/>
            <person name="Durkin A.S."/>
            <person name="DeBoy R.T."/>
            <person name="Davidsen T.M."/>
            <person name="Mora M."/>
            <person name="Scarselli M."/>
            <person name="Margarit y Ros I."/>
            <person name="Peterson J.D."/>
            <person name="Hauser C.R."/>
            <person name="Sundaram J.P."/>
            <person name="Nelson W.C."/>
            <person name="Madupu R."/>
            <person name="Brinkac L.M."/>
            <person name="Dodson R.J."/>
            <person name="Rosovitz M.J."/>
            <person name="Sullivan S.A."/>
            <person name="Daugherty S.C."/>
            <person name="Haft D.H."/>
            <person name="Selengut J."/>
            <person name="Gwinn M.L."/>
            <person name="Zhou L."/>
            <person name="Zafar N."/>
            <person name="Khouri H."/>
            <person name="Radune D."/>
            <person name="Dimitrov G."/>
            <person name="Watkins K."/>
            <person name="O'Connor K.J."/>
            <person name="Smith S."/>
            <person name="Utterback T.R."/>
            <person name="White O."/>
            <person name="Rubens C.E."/>
            <person name="Grandi G."/>
            <person name="Madoff L.C."/>
            <person name="Kasper D.L."/>
            <person name="Telford J.L."/>
            <person name="Wessels M.R."/>
            <person name="Rappuoli R."/>
            <person name="Fraser C.M."/>
        </authorList>
    </citation>
    <scope>NUCLEOTIDE SEQUENCE [LARGE SCALE GENOMIC DNA]</scope>
    <source>
        <strain>ATCC 27591 / A909 / CDC SS700</strain>
    </source>
</reference>
<evidence type="ECO:0000255" key="1">
    <source>
        <dbReference type="HAMAP-Rule" id="MF_01184"/>
    </source>
</evidence>
<keyword id="KW-0963">Cytoplasm</keyword>
<keyword id="KW-0328">Glycosyltransferase</keyword>
<keyword id="KW-0660">Purine salvage</keyword>
<keyword id="KW-0808">Transferase</keyword>
<proteinExistence type="inferred from homology"/>
<feature type="chain" id="PRO_0000339759" description="Xanthine phosphoribosyltransferase">
    <location>
        <begin position="1"/>
        <end position="193"/>
    </location>
</feature>
<feature type="binding site" evidence="1">
    <location>
        <position position="20"/>
    </location>
    <ligand>
        <name>xanthine</name>
        <dbReference type="ChEBI" id="CHEBI:17712"/>
    </ligand>
</feature>
<feature type="binding site" evidence="1">
    <location>
        <position position="27"/>
    </location>
    <ligand>
        <name>xanthine</name>
        <dbReference type="ChEBI" id="CHEBI:17712"/>
    </ligand>
</feature>
<feature type="binding site" evidence="1">
    <location>
        <begin position="128"/>
        <end position="132"/>
    </location>
    <ligand>
        <name>5-phospho-alpha-D-ribose 1-diphosphate</name>
        <dbReference type="ChEBI" id="CHEBI:58017"/>
    </ligand>
</feature>
<feature type="binding site" evidence="1">
    <location>
        <position position="156"/>
    </location>
    <ligand>
        <name>xanthine</name>
        <dbReference type="ChEBI" id="CHEBI:17712"/>
    </ligand>
</feature>
<sequence length="193" mass="20765">MKLLEERILKDGDVLGENILKVDSFLTHQVDFELMQEIGKVFADKYKEAGITKVVTIEASGIAPAVYAAQALGVPMIFAKKAKNITMTEGILTAEVYSFTKQVTSQVSIVSRFLSNDDTVLIIDDFLANGQAAKGLLEIIGQAGAKVAGIGIVIEKSFQDGRDLLEKTGVPVTSLARIKAFENGRVVFAEADA</sequence>